<organism>
    <name type="scientific">Buchnera aphidicola subsp. Acyrthosiphon pisum (strain 5A)</name>
    <dbReference type="NCBI Taxonomy" id="563178"/>
    <lineage>
        <taxon>Bacteria</taxon>
        <taxon>Pseudomonadati</taxon>
        <taxon>Pseudomonadota</taxon>
        <taxon>Gammaproteobacteria</taxon>
        <taxon>Enterobacterales</taxon>
        <taxon>Erwiniaceae</taxon>
        <taxon>Buchnera</taxon>
    </lineage>
</organism>
<protein>
    <recommendedName>
        <fullName evidence="1">Large ribosomal subunit protein uL18</fullName>
    </recommendedName>
    <alternativeName>
        <fullName evidence="2">50S ribosomal protein L18</fullName>
    </alternativeName>
</protein>
<feature type="chain" id="PRO_1000166213" description="Large ribosomal subunit protein uL18">
    <location>
        <begin position="1"/>
        <end position="122"/>
    </location>
</feature>
<sequence length="122" mass="13806">MIFSNKNKIISRIRRSMKTRCKIKKLGAIRLVVHRTSRHMYAQIISSKEAKVLVFASTLERKINCSLKYTGNKEAAAKIGKIIAERALSKGISHVSFDRSGFKYHGRVQVLAESAREVGLKF</sequence>
<name>RL18_BUCA5</name>
<keyword id="KW-0687">Ribonucleoprotein</keyword>
<keyword id="KW-0689">Ribosomal protein</keyword>
<keyword id="KW-0694">RNA-binding</keyword>
<keyword id="KW-0699">rRNA-binding</keyword>
<comment type="function">
    <text evidence="1">This is one of the proteins that bind and probably mediate the attachment of the 5S RNA into the large ribosomal subunit, where it forms part of the central protuberance.</text>
</comment>
<comment type="subunit">
    <text evidence="1">Part of the 50S ribosomal subunit; part of the 5S rRNA/L5/L18/L25 subcomplex. Contacts the 5S and 23S rRNAs.</text>
</comment>
<comment type="similarity">
    <text evidence="1">Belongs to the universal ribosomal protein uL18 family.</text>
</comment>
<reference key="1">
    <citation type="journal article" date="2009" name="Science">
        <title>The dynamics and time scale of ongoing genomic erosion in symbiotic bacteria.</title>
        <authorList>
            <person name="Moran N.A."/>
            <person name="McLaughlin H.J."/>
            <person name="Sorek R."/>
        </authorList>
    </citation>
    <scope>NUCLEOTIDE SEQUENCE [LARGE SCALE GENOMIC DNA]</scope>
    <source>
        <strain>5A</strain>
    </source>
</reference>
<dbReference type="EMBL" id="CP001161">
    <property type="protein sequence ID" value="ACL30852.1"/>
    <property type="molecule type" value="Genomic_DNA"/>
</dbReference>
<dbReference type="RefSeq" id="WP_009874459.1">
    <property type="nucleotide sequence ID" value="NC_011833.1"/>
</dbReference>
<dbReference type="SMR" id="B8D9T1"/>
<dbReference type="KEGG" id="bap:BUAP5A_501"/>
<dbReference type="HOGENOM" id="CLU_098841_0_1_6"/>
<dbReference type="OrthoDB" id="9810939at2"/>
<dbReference type="Proteomes" id="UP000006904">
    <property type="component" value="Chromosome"/>
</dbReference>
<dbReference type="GO" id="GO:0022625">
    <property type="term" value="C:cytosolic large ribosomal subunit"/>
    <property type="evidence" value="ECO:0007669"/>
    <property type="project" value="TreeGrafter"/>
</dbReference>
<dbReference type="GO" id="GO:0008097">
    <property type="term" value="F:5S rRNA binding"/>
    <property type="evidence" value="ECO:0007669"/>
    <property type="project" value="TreeGrafter"/>
</dbReference>
<dbReference type="GO" id="GO:0003735">
    <property type="term" value="F:structural constituent of ribosome"/>
    <property type="evidence" value="ECO:0007669"/>
    <property type="project" value="InterPro"/>
</dbReference>
<dbReference type="GO" id="GO:0006412">
    <property type="term" value="P:translation"/>
    <property type="evidence" value="ECO:0007669"/>
    <property type="project" value="UniProtKB-UniRule"/>
</dbReference>
<dbReference type="CDD" id="cd00432">
    <property type="entry name" value="Ribosomal_L18_L5e"/>
    <property type="match status" value="1"/>
</dbReference>
<dbReference type="FunFam" id="3.30.420.100:FF:000001">
    <property type="entry name" value="50S ribosomal protein L18"/>
    <property type="match status" value="1"/>
</dbReference>
<dbReference type="Gene3D" id="3.30.420.100">
    <property type="match status" value="1"/>
</dbReference>
<dbReference type="HAMAP" id="MF_01337_B">
    <property type="entry name" value="Ribosomal_uL18_B"/>
    <property type="match status" value="1"/>
</dbReference>
<dbReference type="InterPro" id="IPR004389">
    <property type="entry name" value="Ribosomal_uL18_bac-type"/>
</dbReference>
<dbReference type="InterPro" id="IPR005484">
    <property type="entry name" value="Ribosomal_uL18_bac/euk"/>
</dbReference>
<dbReference type="NCBIfam" id="TIGR00060">
    <property type="entry name" value="L18_bact"/>
    <property type="match status" value="1"/>
</dbReference>
<dbReference type="PANTHER" id="PTHR12899">
    <property type="entry name" value="39S RIBOSOMAL PROTEIN L18, MITOCHONDRIAL"/>
    <property type="match status" value="1"/>
</dbReference>
<dbReference type="PANTHER" id="PTHR12899:SF3">
    <property type="entry name" value="LARGE RIBOSOMAL SUBUNIT PROTEIN UL18M"/>
    <property type="match status" value="1"/>
</dbReference>
<dbReference type="Pfam" id="PF00861">
    <property type="entry name" value="Ribosomal_L18p"/>
    <property type="match status" value="1"/>
</dbReference>
<dbReference type="SUPFAM" id="SSF53137">
    <property type="entry name" value="Translational machinery components"/>
    <property type="match status" value="1"/>
</dbReference>
<proteinExistence type="inferred from homology"/>
<accession>B8D9T1</accession>
<gene>
    <name evidence="1" type="primary">rplR</name>
    <name type="ordered locus">BUAP5A_501</name>
</gene>
<evidence type="ECO:0000255" key="1">
    <source>
        <dbReference type="HAMAP-Rule" id="MF_01337"/>
    </source>
</evidence>
<evidence type="ECO:0000305" key="2"/>